<name>TYSY_BRASB</name>
<evidence type="ECO:0000255" key="1">
    <source>
        <dbReference type="HAMAP-Rule" id="MF_00008"/>
    </source>
</evidence>
<protein>
    <recommendedName>
        <fullName evidence="1">Thymidylate synthase</fullName>
        <shortName evidence="1">TS</shortName>
        <shortName evidence="1">TSase</shortName>
        <ecNumber evidence="1">2.1.1.45</ecNumber>
    </recommendedName>
</protein>
<accession>A5EPD3</accession>
<dbReference type="EC" id="2.1.1.45" evidence="1"/>
<dbReference type="EMBL" id="CP000494">
    <property type="protein sequence ID" value="ABQ38027.1"/>
    <property type="molecule type" value="Genomic_DNA"/>
</dbReference>
<dbReference type="RefSeq" id="WP_012045977.1">
    <property type="nucleotide sequence ID" value="NC_009485.1"/>
</dbReference>
<dbReference type="SMR" id="A5EPD3"/>
<dbReference type="STRING" id="288000.BBta_6100"/>
<dbReference type="KEGG" id="bbt:BBta_6100"/>
<dbReference type="eggNOG" id="COG0207">
    <property type="taxonomic scope" value="Bacteria"/>
</dbReference>
<dbReference type="HOGENOM" id="CLU_021669_0_0_5"/>
<dbReference type="OrthoDB" id="9774633at2"/>
<dbReference type="UniPathway" id="UPA00575"/>
<dbReference type="Proteomes" id="UP000000246">
    <property type="component" value="Chromosome"/>
</dbReference>
<dbReference type="GO" id="GO:0005829">
    <property type="term" value="C:cytosol"/>
    <property type="evidence" value="ECO:0007669"/>
    <property type="project" value="TreeGrafter"/>
</dbReference>
<dbReference type="GO" id="GO:0004799">
    <property type="term" value="F:thymidylate synthase activity"/>
    <property type="evidence" value="ECO:0007669"/>
    <property type="project" value="UniProtKB-UniRule"/>
</dbReference>
<dbReference type="GO" id="GO:0006231">
    <property type="term" value="P:dTMP biosynthetic process"/>
    <property type="evidence" value="ECO:0007669"/>
    <property type="project" value="UniProtKB-UniRule"/>
</dbReference>
<dbReference type="GO" id="GO:0006235">
    <property type="term" value="P:dTTP biosynthetic process"/>
    <property type="evidence" value="ECO:0007669"/>
    <property type="project" value="UniProtKB-UniRule"/>
</dbReference>
<dbReference type="GO" id="GO:0032259">
    <property type="term" value="P:methylation"/>
    <property type="evidence" value="ECO:0007669"/>
    <property type="project" value="UniProtKB-KW"/>
</dbReference>
<dbReference type="CDD" id="cd00351">
    <property type="entry name" value="TS_Pyrimidine_HMase"/>
    <property type="match status" value="1"/>
</dbReference>
<dbReference type="FunFam" id="3.30.572.10:FF:000001">
    <property type="entry name" value="Thymidylate synthase"/>
    <property type="match status" value="1"/>
</dbReference>
<dbReference type="Gene3D" id="3.30.572.10">
    <property type="entry name" value="Thymidylate synthase/dCMP hydroxymethylase domain"/>
    <property type="match status" value="1"/>
</dbReference>
<dbReference type="HAMAP" id="MF_00008">
    <property type="entry name" value="Thymidy_synth_bact"/>
    <property type="match status" value="1"/>
</dbReference>
<dbReference type="InterPro" id="IPR045097">
    <property type="entry name" value="Thymidate_synth/dCMP_Mease"/>
</dbReference>
<dbReference type="InterPro" id="IPR023451">
    <property type="entry name" value="Thymidate_synth/dCMP_Mease_dom"/>
</dbReference>
<dbReference type="InterPro" id="IPR036926">
    <property type="entry name" value="Thymidate_synth/dCMP_Mease_sf"/>
</dbReference>
<dbReference type="InterPro" id="IPR000398">
    <property type="entry name" value="Thymidylate_synthase"/>
</dbReference>
<dbReference type="InterPro" id="IPR020940">
    <property type="entry name" value="Thymidylate_synthase_AS"/>
</dbReference>
<dbReference type="NCBIfam" id="NF002497">
    <property type="entry name" value="PRK01827.1-3"/>
    <property type="match status" value="1"/>
</dbReference>
<dbReference type="NCBIfam" id="NF002499">
    <property type="entry name" value="PRK01827.1-5"/>
    <property type="match status" value="1"/>
</dbReference>
<dbReference type="NCBIfam" id="TIGR03284">
    <property type="entry name" value="thym_sym"/>
    <property type="match status" value="2"/>
</dbReference>
<dbReference type="PANTHER" id="PTHR11548:SF9">
    <property type="entry name" value="THYMIDYLATE SYNTHASE"/>
    <property type="match status" value="1"/>
</dbReference>
<dbReference type="PANTHER" id="PTHR11548">
    <property type="entry name" value="THYMIDYLATE SYNTHASE 1"/>
    <property type="match status" value="1"/>
</dbReference>
<dbReference type="Pfam" id="PF00303">
    <property type="entry name" value="Thymidylat_synt"/>
    <property type="match status" value="1"/>
</dbReference>
<dbReference type="PRINTS" id="PR00108">
    <property type="entry name" value="THYMDSNTHASE"/>
</dbReference>
<dbReference type="SUPFAM" id="SSF55831">
    <property type="entry name" value="Thymidylate synthase/dCMP hydroxymethylase"/>
    <property type="match status" value="1"/>
</dbReference>
<dbReference type="PROSITE" id="PS00091">
    <property type="entry name" value="THYMIDYLATE_SYNTHASE"/>
    <property type="match status" value="1"/>
</dbReference>
<sequence length="264" mass="29922">MHQYHDLLERILSDGAEKHDRTGTGTLSVFGHQMRFNLGAGFPLVTTKRLPLKAIVHELLWFLRGDTNIKYLHDHGVTIWDEWADANGDLGPVYGYQWRSWPTPDGGHIDQIANVIDMIKRNPDSRRLIVTAWNPADVEKMALPPCHCLFQFYVVNGKLSCQLYQRSADVFLGVPFNIASYALLTMMVAQVTGLKPGEFVHSFGDVHLYSNHVEQARLQLTRAPRSLPTMTLNPDVKDIFAFRYEDFALAGYDPHPHIKAEVAV</sequence>
<reference key="1">
    <citation type="journal article" date="2007" name="Science">
        <title>Legumes symbioses: absence of nod genes in photosynthetic bradyrhizobia.</title>
        <authorList>
            <person name="Giraud E."/>
            <person name="Moulin L."/>
            <person name="Vallenet D."/>
            <person name="Barbe V."/>
            <person name="Cytryn E."/>
            <person name="Avarre J.-C."/>
            <person name="Jaubert M."/>
            <person name="Simon D."/>
            <person name="Cartieaux F."/>
            <person name="Prin Y."/>
            <person name="Bena G."/>
            <person name="Hannibal L."/>
            <person name="Fardoux J."/>
            <person name="Kojadinovic M."/>
            <person name="Vuillet L."/>
            <person name="Lajus A."/>
            <person name="Cruveiller S."/>
            <person name="Rouy Z."/>
            <person name="Mangenot S."/>
            <person name="Segurens B."/>
            <person name="Dossat C."/>
            <person name="Franck W.L."/>
            <person name="Chang W.-S."/>
            <person name="Saunders E."/>
            <person name="Bruce D."/>
            <person name="Richardson P."/>
            <person name="Normand P."/>
            <person name="Dreyfus B."/>
            <person name="Pignol D."/>
            <person name="Stacey G."/>
            <person name="Emerich D."/>
            <person name="Vermeglio A."/>
            <person name="Medigue C."/>
            <person name="Sadowsky M."/>
        </authorList>
    </citation>
    <scope>NUCLEOTIDE SEQUENCE [LARGE SCALE GENOMIC DNA]</scope>
    <source>
        <strain>BTAi1 / ATCC BAA-1182</strain>
    </source>
</reference>
<comment type="function">
    <text evidence="1">Catalyzes the reductive methylation of 2'-deoxyuridine-5'-monophosphate (dUMP) to 2'-deoxythymidine-5'-monophosphate (dTMP) while utilizing 5,10-methylenetetrahydrofolate (mTHF) as the methyl donor and reductant in the reaction, yielding dihydrofolate (DHF) as a by-product. This enzymatic reaction provides an intracellular de novo source of dTMP, an essential precursor for DNA biosynthesis.</text>
</comment>
<comment type="catalytic activity">
    <reaction evidence="1">
        <text>dUMP + (6R)-5,10-methylene-5,6,7,8-tetrahydrofolate = 7,8-dihydrofolate + dTMP</text>
        <dbReference type="Rhea" id="RHEA:12104"/>
        <dbReference type="ChEBI" id="CHEBI:15636"/>
        <dbReference type="ChEBI" id="CHEBI:57451"/>
        <dbReference type="ChEBI" id="CHEBI:63528"/>
        <dbReference type="ChEBI" id="CHEBI:246422"/>
        <dbReference type="EC" id="2.1.1.45"/>
    </reaction>
</comment>
<comment type="pathway">
    <text evidence="1">Pyrimidine metabolism; dTTP biosynthesis.</text>
</comment>
<comment type="subunit">
    <text evidence="1">Homodimer.</text>
</comment>
<comment type="subcellular location">
    <subcellularLocation>
        <location evidence="1">Cytoplasm</location>
    </subcellularLocation>
</comment>
<comment type="similarity">
    <text evidence="1">Belongs to the thymidylate synthase family. Bacterial-type ThyA subfamily.</text>
</comment>
<keyword id="KW-0963">Cytoplasm</keyword>
<keyword id="KW-0489">Methyltransferase</keyword>
<keyword id="KW-0545">Nucleotide biosynthesis</keyword>
<keyword id="KW-1185">Reference proteome</keyword>
<keyword id="KW-0808">Transferase</keyword>
<feature type="chain" id="PRO_1000000581" description="Thymidylate synthase">
    <location>
        <begin position="1"/>
        <end position="264"/>
    </location>
</feature>
<feature type="active site" description="Nucleophile" evidence="1">
    <location>
        <position position="146"/>
    </location>
</feature>
<feature type="binding site" description="in other chain" evidence="1">
    <location>
        <position position="21"/>
    </location>
    <ligand>
        <name>dUMP</name>
        <dbReference type="ChEBI" id="CHEBI:246422"/>
        <note>ligand shared between dimeric partners</note>
    </ligand>
</feature>
<feature type="binding site" evidence="1">
    <location>
        <begin position="126"/>
        <end position="127"/>
    </location>
    <ligand>
        <name>dUMP</name>
        <dbReference type="ChEBI" id="CHEBI:246422"/>
        <note>ligand shared between dimeric partners</note>
    </ligand>
</feature>
<feature type="binding site" description="in other chain" evidence="1">
    <location>
        <begin position="166"/>
        <end position="169"/>
    </location>
    <ligand>
        <name>dUMP</name>
        <dbReference type="ChEBI" id="CHEBI:246422"/>
        <note>ligand shared between dimeric partners</note>
    </ligand>
</feature>
<feature type="binding site" evidence="1">
    <location>
        <position position="169"/>
    </location>
    <ligand>
        <name>(6R)-5,10-methylene-5,6,7,8-tetrahydrofolate</name>
        <dbReference type="ChEBI" id="CHEBI:15636"/>
    </ligand>
</feature>
<feature type="binding site" description="in other chain" evidence="1">
    <location>
        <position position="177"/>
    </location>
    <ligand>
        <name>dUMP</name>
        <dbReference type="ChEBI" id="CHEBI:246422"/>
        <note>ligand shared between dimeric partners</note>
    </ligand>
</feature>
<feature type="binding site" description="in other chain" evidence="1">
    <location>
        <begin position="207"/>
        <end position="209"/>
    </location>
    <ligand>
        <name>dUMP</name>
        <dbReference type="ChEBI" id="CHEBI:246422"/>
        <note>ligand shared between dimeric partners</note>
    </ligand>
</feature>
<feature type="binding site" evidence="1">
    <location>
        <position position="263"/>
    </location>
    <ligand>
        <name>(6R)-5,10-methylene-5,6,7,8-tetrahydrofolate</name>
        <dbReference type="ChEBI" id="CHEBI:15636"/>
    </ligand>
</feature>
<proteinExistence type="inferred from homology"/>
<gene>
    <name evidence="1" type="primary">thyA</name>
    <name type="ordered locus">BBta_6100</name>
</gene>
<organism>
    <name type="scientific">Bradyrhizobium sp. (strain BTAi1 / ATCC BAA-1182)</name>
    <dbReference type="NCBI Taxonomy" id="288000"/>
    <lineage>
        <taxon>Bacteria</taxon>
        <taxon>Pseudomonadati</taxon>
        <taxon>Pseudomonadota</taxon>
        <taxon>Alphaproteobacteria</taxon>
        <taxon>Hyphomicrobiales</taxon>
        <taxon>Nitrobacteraceae</taxon>
        <taxon>Bradyrhizobium</taxon>
    </lineage>
</organism>